<gene>
    <name evidence="1" type="primary">add</name>
    <name type="ordered locus">EF_0171</name>
</gene>
<comment type="function">
    <text evidence="1">Catalyzes the hydrolytic deamination of adenosine and 2-deoxyadenosine.</text>
</comment>
<comment type="catalytic activity">
    <reaction evidence="1">
        <text>adenosine + H2O + H(+) = inosine + NH4(+)</text>
        <dbReference type="Rhea" id="RHEA:24408"/>
        <dbReference type="ChEBI" id="CHEBI:15377"/>
        <dbReference type="ChEBI" id="CHEBI:15378"/>
        <dbReference type="ChEBI" id="CHEBI:16335"/>
        <dbReference type="ChEBI" id="CHEBI:17596"/>
        <dbReference type="ChEBI" id="CHEBI:28938"/>
        <dbReference type="EC" id="3.5.4.4"/>
    </reaction>
    <physiologicalReaction direction="left-to-right" evidence="1">
        <dbReference type="Rhea" id="RHEA:24409"/>
    </physiologicalReaction>
</comment>
<comment type="catalytic activity">
    <reaction evidence="1">
        <text>2'-deoxyadenosine + H2O + H(+) = 2'-deoxyinosine + NH4(+)</text>
        <dbReference type="Rhea" id="RHEA:28190"/>
        <dbReference type="ChEBI" id="CHEBI:15377"/>
        <dbReference type="ChEBI" id="CHEBI:15378"/>
        <dbReference type="ChEBI" id="CHEBI:17256"/>
        <dbReference type="ChEBI" id="CHEBI:28938"/>
        <dbReference type="ChEBI" id="CHEBI:28997"/>
        <dbReference type="EC" id="3.5.4.4"/>
    </reaction>
    <physiologicalReaction direction="left-to-right" evidence="1">
        <dbReference type="Rhea" id="RHEA:28191"/>
    </physiologicalReaction>
</comment>
<comment type="cofactor">
    <cofactor evidence="1">
        <name>Zn(2+)</name>
        <dbReference type="ChEBI" id="CHEBI:29105"/>
    </cofactor>
    <text evidence="1">Binds 1 zinc ion per subunit.</text>
</comment>
<comment type="similarity">
    <text evidence="1">Belongs to the metallo-dependent hydrolases superfamily. Adenosine and AMP deaminases family. Adenosine deaminase subfamily.</text>
</comment>
<accession>Q839J4</accession>
<name>ADD_ENTFA</name>
<proteinExistence type="inferred from homology"/>
<evidence type="ECO:0000255" key="1">
    <source>
        <dbReference type="HAMAP-Rule" id="MF_00540"/>
    </source>
</evidence>
<sequence length="337" mass="37362">MEESRVRQLPKIELHCHLDGSIRPTTLRTIAEKQNIPLPQDEQALKELVVAPEKCTDLNDYLTRFDFVLTCLQTAEALQAAAYDVISQAAEDGVAYIEVRFAPSQHTEKGLRLPEIVTAVLTGLKQGEEDFGVKSNALLCGMRHDQQQAIEKIVHLAHDFRETGVVGFDLAGNEVDFPPYTFEDVLALANQLSIPLTLHAGECGCGKNVADAVTLGATRIGHGIALKDTPEYLALLKEKKVLLEMCPTSNFQTGTVKTLAEYPFQQFIEAGLAVCINTDNRTVSDTTLTKEFMKLATWYQLSYDEMKQLTKNALAGAFLSPDEKKLLNQKIDQAYLF</sequence>
<feature type="chain" id="PRO_0000194370" description="Adenosine deaminase">
    <location>
        <begin position="1"/>
        <end position="337"/>
    </location>
</feature>
<feature type="active site" description="Proton donor" evidence="1">
    <location>
        <position position="202"/>
    </location>
</feature>
<feature type="binding site" evidence="1">
    <location>
        <position position="15"/>
    </location>
    <ligand>
        <name>Zn(2+)</name>
        <dbReference type="ChEBI" id="CHEBI:29105"/>
        <note>catalytic</note>
    </ligand>
</feature>
<feature type="binding site" evidence="1">
    <location>
        <position position="17"/>
    </location>
    <ligand>
        <name>substrate</name>
    </ligand>
</feature>
<feature type="binding site" evidence="1">
    <location>
        <position position="17"/>
    </location>
    <ligand>
        <name>Zn(2+)</name>
        <dbReference type="ChEBI" id="CHEBI:29105"/>
        <note>catalytic</note>
    </ligand>
</feature>
<feature type="binding site" evidence="1">
    <location>
        <position position="19"/>
    </location>
    <ligand>
        <name>substrate</name>
    </ligand>
</feature>
<feature type="binding site" evidence="1">
    <location>
        <position position="172"/>
    </location>
    <ligand>
        <name>substrate</name>
    </ligand>
</feature>
<feature type="binding site" evidence="1">
    <location>
        <position position="199"/>
    </location>
    <ligand>
        <name>Zn(2+)</name>
        <dbReference type="ChEBI" id="CHEBI:29105"/>
        <note>catalytic</note>
    </ligand>
</feature>
<feature type="binding site" evidence="1">
    <location>
        <position position="279"/>
    </location>
    <ligand>
        <name>Zn(2+)</name>
        <dbReference type="ChEBI" id="CHEBI:29105"/>
        <note>catalytic</note>
    </ligand>
</feature>
<feature type="site" description="Important for catalytic activity" evidence="1">
    <location>
        <position position="222"/>
    </location>
</feature>
<dbReference type="EC" id="3.5.4.4" evidence="1"/>
<dbReference type="EMBL" id="AE016830">
    <property type="protein sequence ID" value="AAO80045.1"/>
    <property type="molecule type" value="Genomic_DNA"/>
</dbReference>
<dbReference type="RefSeq" id="NP_813973.1">
    <property type="nucleotide sequence ID" value="NC_004668.1"/>
</dbReference>
<dbReference type="SMR" id="Q839J4"/>
<dbReference type="STRING" id="226185.EF_0171"/>
<dbReference type="EnsemblBacteria" id="AAO80045">
    <property type="protein sequence ID" value="AAO80045"/>
    <property type="gene ID" value="EF_0171"/>
</dbReference>
<dbReference type="KEGG" id="efa:EF0171"/>
<dbReference type="PATRIC" id="fig|226185.45.peg.90"/>
<dbReference type="eggNOG" id="COG1816">
    <property type="taxonomic scope" value="Bacteria"/>
</dbReference>
<dbReference type="HOGENOM" id="CLU_039228_0_0_9"/>
<dbReference type="Proteomes" id="UP000001415">
    <property type="component" value="Chromosome"/>
</dbReference>
<dbReference type="GO" id="GO:0005829">
    <property type="term" value="C:cytosol"/>
    <property type="evidence" value="ECO:0007669"/>
    <property type="project" value="TreeGrafter"/>
</dbReference>
<dbReference type="GO" id="GO:0046936">
    <property type="term" value="F:2'-deoxyadenosine deaminase activity"/>
    <property type="evidence" value="ECO:0007669"/>
    <property type="project" value="RHEA"/>
</dbReference>
<dbReference type="GO" id="GO:0004000">
    <property type="term" value="F:adenosine deaminase activity"/>
    <property type="evidence" value="ECO:0007669"/>
    <property type="project" value="UniProtKB-UniRule"/>
</dbReference>
<dbReference type="GO" id="GO:0008270">
    <property type="term" value="F:zinc ion binding"/>
    <property type="evidence" value="ECO:0007669"/>
    <property type="project" value="UniProtKB-UniRule"/>
</dbReference>
<dbReference type="GO" id="GO:0006154">
    <property type="term" value="P:adenosine catabolic process"/>
    <property type="evidence" value="ECO:0007669"/>
    <property type="project" value="TreeGrafter"/>
</dbReference>
<dbReference type="GO" id="GO:0043103">
    <property type="term" value="P:hypoxanthine salvage"/>
    <property type="evidence" value="ECO:0007669"/>
    <property type="project" value="TreeGrafter"/>
</dbReference>
<dbReference type="GO" id="GO:0046103">
    <property type="term" value="P:inosine biosynthetic process"/>
    <property type="evidence" value="ECO:0007669"/>
    <property type="project" value="TreeGrafter"/>
</dbReference>
<dbReference type="GO" id="GO:0009117">
    <property type="term" value="P:nucleotide metabolic process"/>
    <property type="evidence" value="ECO:0007669"/>
    <property type="project" value="UniProtKB-KW"/>
</dbReference>
<dbReference type="GO" id="GO:0009168">
    <property type="term" value="P:purine ribonucleoside monophosphate biosynthetic process"/>
    <property type="evidence" value="ECO:0007669"/>
    <property type="project" value="UniProtKB-UniRule"/>
</dbReference>
<dbReference type="CDD" id="cd01320">
    <property type="entry name" value="ADA"/>
    <property type="match status" value="1"/>
</dbReference>
<dbReference type="Gene3D" id="3.20.20.140">
    <property type="entry name" value="Metal-dependent hydrolases"/>
    <property type="match status" value="1"/>
</dbReference>
<dbReference type="HAMAP" id="MF_00540">
    <property type="entry name" value="A_deaminase"/>
    <property type="match status" value="1"/>
</dbReference>
<dbReference type="InterPro" id="IPR028893">
    <property type="entry name" value="A_deaminase"/>
</dbReference>
<dbReference type="InterPro" id="IPR001365">
    <property type="entry name" value="A_deaminase_dom"/>
</dbReference>
<dbReference type="InterPro" id="IPR006330">
    <property type="entry name" value="Ado/ade_deaminase"/>
</dbReference>
<dbReference type="InterPro" id="IPR032466">
    <property type="entry name" value="Metal_Hydrolase"/>
</dbReference>
<dbReference type="NCBIfam" id="TIGR01430">
    <property type="entry name" value="aden_deam"/>
    <property type="match status" value="1"/>
</dbReference>
<dbReference type="PANTHER" id="PTHR11409">
    <property type="entry name" value="ADENOSINE DEAMINASE"/>
    <property type="match status" value="1"/>
</dbReference>
<dbReference type="PANTHER" id="PTHR11409:SF43">
    <property type="entry name" value="ADENOSINE DEAMINASE"/>
    <property type="match status" value="1"/>
</dbReference>
<dbReference type="Pfam" id="PF00962">
    <property type="entry name" value="A_deaminase"/>
    <property type="match status" value="1"/>
</dbReference>
<dbReference type="SUPFAM" id="SSF51556">
    <property type="entry name" value="Metallo-dependent hydrolases"/>
    <property type="match status" value="1"/>
</dbReference>
<organism>
    <name type="scientific">Enterococcus faecalis (strain ATCC 700802 / V583)</name>
    <dbReference type="NCBI Taxonomy" id="226185"/>
    <lineage>
        <taxon>Bacteria</taxon>
        <taxon>Bacillati</taxon>
        <taxon>Bacillota</taxon>
        <taxon>Bacilli</taxon>
        <taxon>Lactobacillales</taxon>
        <taxon>Enterococcaceae</taxon>
        <taxon>Enterococcus</taxon>
    </lineage>
</organism>
<reference key="1">
    <citation type="journal article" date="2003" name="Science">
        <title>Role of mobile DNA in the evolution of vancomycin-resistant Enterococcus faecalis.</title>
        <authorList>
            <person name="Paulsen I.T."/>
            <person name="Banerjei L."/>
            <person name="Myers G.S.A."/>
            <person name="Nelson K.E."/>
            <person name="Seshadri R."/>
            <person name="Read T.D."/>
            <person name="Fouts D.E."/>
            <person name="Eisen J.A."/>
            <person name="Gill S.R."/>
            <person name="Heidelberg J.F."/>
            <person name="Tettelin H."/>
            <person name="Dodson R.J."/>
            <person name="Umayam L.A."/>
            <person name="Brinkac L.M."/>
            <person name="Beanan M.J."/>
            <person name="Daugherty S.C."/>
            <person name="DeBoy R.T."/>
            <person name="Durkin S.A."/>
            <person name="Kolonay J.F."/>
            <person name="Madupu R."/>
            <person name="Nelson W.C."/>
            <person name="Vamathevan J.J."/>
            <person name="Tran B."/>
            <person name="Upton J."/>
            <person name="Hansen T."/>
            <person name="Shetty J."/>
            <person name="Khouri H.M."/>
            <person name="Utterback T.R."/>
            <person name="Radune D."/>
            <person name="Ketchum K.A."/>
            <person name="Dougherty B.A."/>
            <person name="Fraser C.M."/>
        </authorList>
    </citation>
    <scope>NUCLEOTIDE SEQUENCE [LARGE SCALE GENOMIC DNA]</scope>
    <source>
        <strain>ATCC 700802 / V583</strain>
    </source>
</reference>
<protein>
    <recommendedName>
        <fullName evidence="1">Adenosine deaminase</fullName>
        <ecNumber evidence="1">3.5.4.4</ecNumber>
    </recommendedName>
    <alternativeName>
        <fullName evidence="1">Adenosine aminohydrolase</fullName>
    </alternativeName>
</protein>
<keyword id="KW-0378">Hydrolase</keyword>
<keyword id="KW-0479">Metal-binding</keyword>
<keyword id="KW-0546">Nucleotide metabolism</keyword>
<keyword id="KW-1185">Reference proteome</keyword>
<keyword id="KW-0862">Zinc</keyword>